<dbReference type="EMBL" id="X04465">
    <property type="protein sequence ID" value="CAA28114.1"/>
    <property type="molecule type" value="Genomic_DNA"/>
</dbReference>
<dbReference type="PIR" id="A05059">
    <property type="entry name" value="A05059"/>
</dbReference>
<dbReference type="RefSeq" id="NP_039328.1">
    <property type="nucleotide sequence ID" value="NC_001319.1"/>
</dbReference>
<dbReference type="RefSeq" id="YP_009646841.1">
    <property type="nucleotide sequence ID" value="NC_042505.1"/>
</dbReference>
<dbReference type="SMR" id="P12160"/>
<dbReference type="GeneID" id="2702610"/>
<dbReference type="GeneID" id="40386743"/>
<dbReference type="GO" id="GO:0009535">
    <property type="term" value="C:chloroplast thylakoid membrane"/>
    <property type="evidence" value="ECO:0007669"/>
    <property type="project" value="UniProtKB-SubCell"/>
</dbReference>
<dbReference type="GO" id="GO:0009523">
    <property type="term" value="C:photosystem II"/>
    <property type="evidence" value="ECO:0007669"/>
    <property type="project" value="UniProtKB-KW"/>
</dbReference>
<dbReference type="GO" id="GO:0042301">
    <property type="term" value="F:phosphate ion binding"/>
    <property type="evidence" value="ECO:0007669"/>
    <property type="project" value="InterPro"/>
</dbReference>
<dbReference type="GO" id="GO:0015979">
    <property type="term" value="P:photosynthesis"/>
    <property type="evidence" value="ECO:0007669"/>
    <property type="project" value="UniProtKB-UniRule"/>
</dbReference>
<dbReference type="GO" id="GO:0050821">
    <property type="term" value="P:protein stabilization"/>
    <property type="evidence" value="ECO:0007669"/>
    <property type="project" value="InterPro"/>
</dbReference>
<dbReference type="Gene3D" id="1.20.5.880">
    <property type="entry name" value="Photosystem II reaction center protein H"/>
    <property type="match status" value="1"/>
</dbReference>
<dbReference type="HAMAP" id="MF_00752">
    <property type="entry name" value="PSII_PsbH"/>
    <property type="match status" value="1"/>
</dbReference>
<dbReference type="InterPro" id="IPR001056">
    <property type="entry name" value="PSII_PsbH"/>
</dbReference>
<dbReference type="InterPro" id="IPR036863">
    <property type="entry name" value="PSII_PsbH_sf"/>
</dbReference>
<dbReference type="NCBIfam" id="NF002728">
    <property type="entry name" value="PRK02624.1"/>
    <property type="match status" value="1"/>
</dbReference>
<dbReference type="PANTHER" id="PTHR34469">
    <property type="entry name" value="PHOTOSYSTEM II REACTION CENTER PROTEIN H"/>
    <property type="match status" value="1"/>
</dbReference>
<dbReference type="PANTHER" id="PTHR34469:SF4">
    <property type="entry name" value="PHOTOSYSTEM II REACTION CENTER PROTEIN H"/>
    <property type="match status" value="1"/>
</dbReference>
<dbReference type="Pfam" id="PF00737">
    <property type="entry name" value="PsbH"/>
    <property type="match status" value="1"/>
</dbReference>
<dbReference type="SUPFAM" id="SSF161025">
    <property type="entry name" value="Photosystem II 10 kDa phosphoprotein PsbH"/>
    <property type="match status" value="1"/>
</dbReference>
<keyword id="KW-0150">Chloroplast</keyword>
<keyword id="KW-0472">Membrane</keyword>
<keyword id="KW-0597">Phosphoprotein</keyword>
<keyword id="KW-0602">Photosynthesis</keyword>
<keyword id="KW-0604">Photosystem II</keyword>
<keyword id="KW-0934">Plastid</keyword>
<keyword id="KW-0793">Thylakoid</keyword>
<keyword id="KW-0812">Transmembrane</keyword>
<keyword id="KW-1133">Transmembrane helix</keyword>
<comment type="function">
    <text evidence="2">One of the components of the core complex of photosystem II (PSII), required for its stability and/or assembly. PSII is a light-driven water:plastoquinone oxidoreductase that uses light energy to abstract electrons from H(2)O, generating O(2) and a proton gradient subsequently used for ATP formation. It consists of a core antenna complex that captures photons, and an electron transfer chain that converts photonic excitation into a charge separation.</text>
</comment>
<comment type="subunit">
    <text evidence="2">PSII is composed of 1 copy each of membrane proteins PsbA, PsbB, PsbC, PsbD, PsbE, PsbF, PsbH, PsbI, PsbJ, PsbK, PsbL, PsbM, PsbT, PsbX, PsbY, PsbZ, Psb30/Ycf12, at least 3 peripheral proteins of the oxygen-evolving complex and a large number of cofactors. It forms dimeric complexes.</text>
</comment>
<comment type="subcellular location">
    <subcellularLocation>
        <location evidence="2">Plastid</location>
        <location evidence="2">Chloroplast thylakoid membrane</location>
        <topology evidence="2">Single-pass membrane protein</topology>
    </subcellularLocation>
</comment>
<comment type="PTM">
    <text evidence="2">Phosphorylation is a light-dependent reaction catalyzed by a membrane-bound kinase; phosphorylation occurs on Thr residue(s) in the N-terminus of the protein.</text>
</comment>
<comment type="similarity">
    <text evidence="2">Belongs to the PsbH family.</text>
</comment>
<protein>
    <recommendedName>
        <fullName evidence="2">Photosystem II reaction center protein H</fullName>
        <shortName evidence="2">PSII-H</shortName>
    </recommendedName>
    <alternativeName>
        <fullName evidence="2">Photosystem II 10 kDa phosphoprotein</fullName>
    </alternativeName>
</protein>
<evidence type="ECO:0000250" key="1">
    <source>
        <dbReference type="UniProtKB" id="P56780"/>
    </source>
</evidence>
<evidence type="ECO:0000255" key="2">
    <source>
        <dbReference type="HAMAP-Rule" id="MF_00752"/>
    </source>
</evidence>
<feature type="initiator methionine" description="Removed" evidence="1">
    <location>
        <position position="1"/>
    </location>
</feature>
<feature type="chain" id="PRO_0000070516" description="Photosystem II reaction center protein H">
    <location>
        <begin position="2"/>
        <end position="74"/>
    </location>
</feature>
<feature type="transmembrane region" description="Helical" evidence="2">
    <location>
        <begin position="41"/>
        <end position="61"/>
    </location>
</feature>
<feature type="modified residue" description="Phosphothreonine" evidence="2">
    <location>
        <position position="3"/>
    </location>
</feature>
<name>PSBH_MARPO</name>
<accession>P12160</accession>
<organism>
    <name type="scientific">Marchantia polymorpha</name>
    <name type="common">Common liverwort</name>
    <name type="synonym">Marchantia aquatica</name>
    <dbReference type="NCBI Taxonomy" id="3197"/>
    <lineage>
        <taxon>Eukaryota</taxon>
        <taxon>Viridiplantae</taxon>
        <taxon>Streptophyta</taxon>
        <taxon>Embryophyta</taxon>
        <taxon>Marchantiophyta</taxon>
        <taxon>Marchantiopsida</taxon>
        <taxon>Marchantiidae</taxon>
        <taxon>Marchantiales</taxon>
        <taxon>Marchantiaceae</taxon>
        <taxon>Marchantia</taxon>
    </lineage>
</organism>
<gene>
    <name evidence="2" type="primary">psbH</name>
</gene>
<sequence length="74" mass="7928">MATQIIDDTPKTKGKKSGIGDILKPLNSEYGKVAPGWGTTPLMGIMMALFAVFLVVILELYNSSVLLDGVSVSW</sequence>
<geneLocation type="chloroplast"/>
<reference key="1">
    <citation type="journal article" date="1988" name="J. Mol. Biol.">
        <title>Structure and organization of Marchantia polymorpha chloroplast genome. III. Gene organization of the large single copy region from rbcL to trnI(CAU).</title>
        <authorList>
            <person name="Fukuzawa H."/>
            <person name="Kohchi T."/>
            <person name="Sano T."/>
            <person name="Shirai H."/>
            <person name="Umesono K."/>
            <person name="Inokuchi H."/>
            <person name="Ozeki H."/>
            <person name="Ohyama K."/>
        </authorList>
    </citation>
    <scope>NUCLEOTIDE SEQUENCE [GENOMIC DNA]</scope>
</reference>
<reference key="2">
    <citation type="journal article" date="1986" name="Nature">
        <title>Chloroplast gene organization deduced from complete sequence of liverwort Marchantia polymorpha chloroplast DNA.</title>
        <authorList>
            <person name="Ohyama K."/>
            <person name="Fukuzawa H."/>
            <person name="Kohchi T."/>
            <person name="Shirai H."/>
            <person name="Sano T."/>
            <person name="Sano S."/>
            <person name="Umesono K."/>
            <person name="Shiki Y."/>
            <person name="Takeuchi M."/>
            <person name="Chang Z."/>
            <person name="Aota S."/>
            <person name="Inokuchi H."/>
            <person name="Ozeki H."/>
        </authorList>
    </citation>
    <scope>NUCLEOTIDE SEQUENCE [LARGE SCALE GENOMIC DNA]</scope>
</reference>
<proteinExistence type="inferred from homology"/>